<sequence length="147" mass="16279">MKALIILGFLFLSVAVQGKVFERCELARTLKKLGLDGYKGVSLANWLCLTKWESSYNTKATNYNPGSESTDYGIFQINSKWWCNDGKTPNAVDGCHVSCSELMENDIAKAVACAKQIVSEQGITAWVAWKSHCRDHDVSSYVEGCTL</sequence>
<gene>
    <name type="primary">LYZ1</name>
</gene>
<feature type="signal peptide" evidence="1">
    <location>
        <begin position="1"/>
        <end position="18"/>
    </location>
</feature>
<feature type="chain" id="PRO_0000018454" description="Lysozyme C-1">
    <location>
        <begin position="19"/>
        <end position="147"/>
    </location>
</feature>
<feature type="domain" description="C-type lysozyme" evidence="2">
    <location>
        <begin position="19"/>
        <end position="147"/>
    </location>
</feature>
<feature type="active site" evidence="2">
    <location>
        <position position="53"/>
    </location>
</feature>
<feature type="active site" evidence="2">
    <location>
        <position position="71"/>
    </location>
</feature>
<feature type="disulfide bond" evidence="2">
    <location>
        <begin position="24"/>
        <end position="145"/>
    </location>
</feature>
<feature type="disulfide bond" evidence="2">
    <location>
        <begin position="48"/>
        <end position="133"/>
    </location>
</feature>
<feature type="disulfide bond" evidence="2">
    <location>
        <begin position="83"/>
        <end position="99"/>
    </location>
</feature>
<feature type="disulfide bond" evidence="2">
    <location>
        <begin position="95"/>
        <end position="113"/>
    </location>
</feature>
<keyword id="KW-0929">Antimicrobial</keyword>
<keyword id="KW-0081">Bacteriolytic enzyme</keyword>
<keyword id="KW-0222">Digestion</keyword>
<keyword id="KW-1015">Disulfide bond</keyword>
<keyword id="KW-0326">Glycosidase</keyword>
<keyword id="KW-0378">Hydrolase</keyword>
<keyword id="KW-1185">Reference proteome</keyword>
<keyword id="KW-0732">Signal</keyword>
<proteinExistence type="evidence at transcript level"/>
<reference key="1">
    <citation type="journal article" date="1993" name="J. Mol. Evol.">
        <title>Characterization of the cow stomach lysozyme genes: repetitive DNA and concerted evolution.</title>
        <authorList>
            <person name="Irwin D.M."/>
            <person name="White R.T."/>
            <person name="Wilson A.C."/>
        </authorList>
    </citation>
    <scope>NUCLEOTIDE SEQUENCE</scope>
</reference>
<comment type="function">
    <text>Lysozymes have primarily a bacteriolytic function; those in tissues and body fluids are associated with the monocyte-macrophage system and enhance the activity of immunoagents.</text>
</comment>
<comment type="catalytic activity">
    <reaction>
        <text>Hydrolysis of (1-&gt;4)-beta-linkages between N-acetylmuramic acid and N-acetyl-D-glucosamine residues in a peptidoglycan and between N-acetyl-D-glucosamine residues in chitodextrins.</text>
        <dbReference type="EC" id="3.2.1.17"/>
    </reaction>
</comment>
<comment type="subunit">
    <text>Monomer.</text>
</comment>
<comment type="tissue specificity">
    <text>Stomach-specific.</text>
</comment>
<comment type="miscellaneous">
    <text>Lysozyme C is capable of both hydrolysis and transglycosylation; it also shows a slight esterase activity. It acts rapidly on both peptide-substituted and unsubstituted peptidoglycan, and slowly on chitin oligosaccharides.</text>
</comment>
<comment type="miscellaneous">
    <text>The ruminant gastric lysozymes, which digest symbiotic bacteria coming with cud from the rumen, are much more resistant to inactivation by pepsin than are other lysozymes.</text>
</comment>
<comment type="similarity">
    <text evidence="2">Belongs to the glycosyl hydrolase 22 family.</text>
</comment>
<protein>
    <recommendedName>
        <fullName>Lysozyme C-1</fullName>
        <ecNumber>3.2.1.17</ecNumber>
    </recommendedName>
    <alternativeName>
        <fullName>1,4-beta-N-acetylmuramidase C</fullName>
    </alternativeName>
</protein>
<organism>
    <name type="scientific">Bos taurus</name>
    <name type="common">Bovine</name>
    <dbReference type="NCBI Taxonomy" id="9913"/>
    <lineage>
        <taxon>Eukaryota</taxon>
        <taxon>Metazoa</taxon>
        <taxon>Chordata</taxon>
        <taxon>Craniata</taxon>
        <taxon>Vertebrata</taxon>
        <taxon>Euteleostomi</taxon>
        <taxon>Mammalia</taxon>
        <taxon>Eutheria</taxon>
        <taxon>Laurasiatheria</taxon>
        <taxon>Artiodactyla</taxon>
        <taxon>Ruminantia</taxon>
        <taxon>Pecora</taxon>
        <taxon>Bovidae</taxon>
        <taxon>Bovinae</taxon>
        <taxon>Bos</taxon>
    </lineage>
</organism>
<name>LYSC1_BOVIN</name>
<dbReference type="EC" id="3.2.1.17"/>
<dbReference type="EMBL" id="M95097">
    <property type="protein sequence ID" value="AAC37310.1"/>
    <property type="molecule type" value="Unassigned_DNA"/>
</dbReference>
<dbReference type="PIR" id="A34277">
    <property type="entry name" value="A34277"/>
</dbReference>
<dbReference type="SMR" id="Q06285"/>
<dbReference type="FunCoup" id="Q06285">
    <property type="interactions" value="17"/>
</dbReference>
<dbReference type="STRING" id="9913.ENSBTAP00000004235"/>
<dbReference type="PaxDb" id="9913-ENSBTAP00000004235"/>
<dbReference type="Ensembl" id="ENSBTAT00000004235.4">
    <property type="protein sequence ID" value="ENSBTAP00000004235.3"/>
    <property type="gene ID" value="ENSBTAG00000046511.2"/>
</dbReference>
<dbReference type="VEuPathDB" id="HostDB:ENSBTAG00000046511"/>
<dbReference type="eggNOG" id="ENOG502S4CB">
    <property type="taxonomic scope" value="Eukaryota"/>
</dbReference>
<dbReference type="GeneTree" id="ENSGT00940000153832"/>
<dbReference type="HOGENOM" id="CLU_111620_0_1_1"/>
<dbReference type="InParanoid" id="Q06285"/>
<dbReference type="OMA" id="TIQCELA"/>
<dbReference type="OrthoDB" id="9698384at2759"/>
<dbReference type="TreeFam" id="TF324882"/>
<dbReference type="Reactome" id="R-BTA-6798695">
    <property type="pathway name" value="Neutrophil degranulation"/>
</dbReference>
<dbReference type="Reactome" id="R-BTA-6803157">
    <property type="pathway name" value="Antimicrobial peptides"/>
</dbReference>
<dbReference type="Proteomes" id="UP000009136">
    <property type="component" value="Chromosome 5"/>
</dbReference>
<dbReference type="Bgee" id="ENSBTAG00000046511">
    <property type="expression patterns" value="Expressed in urinary bladder and 36 other cell types or tissues"/>
</dbReference>
<dbReference type="GO" id="GO:0003796">
    <property type="term" value="F:lysozyme activity"/>
    <property type="evidence" value="ECO:0000318"/>
    <property type="project" value="GO_Central"/>
</dbReference>
<dbReference type="GO" id="GO:0050829">
    <property type="term" value="P:defense response to Gram-negative bacterium"/>
    <property type="evidence" value="ECO:0000318"/>
    <property type="project" value="GO_Central"/>
</dbReference>
<dbReference type="GO" id="GO:0050830">
    <property type="term" value="P:defense response to Gram-positive bacterium"/>
    <property type="evidence" value="ECO:0000318"/>
    <property type="project" value="GO_Central"/>
</dbReference>
<dbReference type="GO" id="GO:0007586">
    <property type="term" value="P:digestion"/>
    <property type="evidence" value="ECO:0007669"/>
    <property type="project" value="UniProtKB-KW"/>
</dbReference>
<dbReference type="GO" id="GO:0031640">
    <property type="term" value="P:killing of cells of another organism"/>
    <property type="evidence" value="ECO:0007669"/>
    <property type="project" value="UniProtKB-KW"/>
</dbReference>
<dbReference type="CDD" id="cd16897">
    <property type="entry name" value="LYZ_C"/>
    <property type="match status" value="1"/>
</dbReference>
<dbReference type="FunFam" id="1.10.530.10:FF:000001">
    <property type="entry name" value="Lysozyme C"/>
    <property type="match status" value="1"/>
</dbReference>
<dbReference type="Gene3D" id="1.10.530.10">
    <property type="match status" value="1"/>
</dbReference>
<dbReference type="InterPro" id="IPR001916">
    <property type="entry name" value="Glyco_hydro_22"/>
</dbReference>
<dbReference type="InterPro" id="IPR019799">
    <property type="entry name" value="Glyco_hydro_22_CS"/>
</dbReference>
<dbReference type="InterPro" id="IPR000974">
    <property type="entry name" value="Glyco_hydro_22_lys"/>
</dbReference>
<dbReference type="InterPro" id="IPR023346">
    <property type="entry name" value="Lysozyme-like_dom_sf"/>
</dbReference>
<dbReference type="PANTHER" id="PTHR11407">
    <property type="entry name" value="LYSOZYME C"/>
    <property type="match status" value="1"/>
</dbReference>
<dbReference type="PANTHER" id="PTHR11407:SF28">
    <property type="entry name" value="LYSOZYME C"/>
    <property type="match status" value="1"/>
</dbReference>
<dbReference type="Pfam" id="PF00062">
    <property type="entry name" value="Lys"/>
    <property type="match status" value="1"/>
</dbReference>
<dbReference type="PRINTS" id="PR00137">
    <property type="entry name" value="LYSOZYME"/>
</dbReference>
<dbReference type="PRINTS" id="PR00135">
    <property type="entry name" value="LYZLACT"/>
</dbReference>
<dbReference type="SMART" id="SM00263">
    <property type="entry name" value="LYZ1"/>
    <property type="match status" value="1"/>
</dbReference>
<dbReference type="SUPFAM" id="SSF53955">
    <property type="entry name" value="Lysozyme-like"/>
    <property type="match status" value="1"/>
</dbReference>
<dbReference type="PROSITE" id="PS00128">
    <property type="entry name" value="GLYCOSYL_HYDROL_F22_1"/>
    <property type="match status" value="1"/>
</dbReference>
<dbReference type="PROSITE" id="PS51348">
    <property type="entry name" value="GLYCOSYL_HYDROL_F22_2"/>
    <property type="match status" value="1"/>
</dbReference>
<accession>Q06285</accession>
<evidence type="ECO:0000250" key="1"/>
<evidence type="ECO:0000255" key="2">
    <source>
        <dbReference type="PROSITE-ProRule" id="PRU00680"/>
    </source>
</evidence>